<reference key="1">
    <citation type="journal article" date="2007" name="Mol. Phylogenet. Evol.">
        <title>Phylogenetic and evolutionary implications of complete chloroplast genome sequences of four early-diverging angiosperms: Buxus (Buxaceae), Chloranthus (Chloranthaceae), Dioscorea (Dioscoreaceae), and Illicium (Schisandraceae).</title>
        <authorList>
            <person name="Hansen D.R."/>
            <person name="Dastidar S.G."/>
            <person name="Cai Z."/>
            <person name="Penaflor C."/>
            <person name="Kuehl J.V."/>
            <person name="Boore J.L."/>
            <person name="Jansen R.K."/>
        </authorList>
    </citation>
    <scope>NUCLEOTIDE SEQUENCE [LARGE SCALE GENOMIC DNA]</scope>
</reference>
<feature type="chain" id="PRO_0000359830" description="Photosystem II CP47 reaction center protein">
    <location>
        <begin position="1"/>
        <end position="508"/>
    </location>
</feature>
<feature type="transmembrane region" description="Helical" evidence="1">
    <location>
        <begin position="21"/>
        <end position="36"/>
    </location>
</feature>
<feature type="transmembrane region" description="Helical" evidence="1">
    <location>
        <begin position="101"/>
        <end position="115"/>
    </location>
</feature>
<feature type="transmembrane region" description="Helical" evidence="1">
    <location>
        <begin position="140"/>
        <end position="156"/>
    </location>
</feature>
<feature type="transmembrane region" description="Helical" evidence="1">
    <location>
        <begin position="203"/>
        <end position="218"/>
    </location>
</feature>
<feature type="transmembrane region" description="Helical" evidence="1">
    <location>
        <begin position="237"/>
        <end position="252"/>
    </location>
</feature>
<feature type="transmembrane region" description="Helical" evidence="1">
    <location>
        <begin position="457"/>
        <end position="472"/>
    </location>
</feature>
<name>PSBB_ILLOL</name>
<gene>
    <name evidence="1" type="primary">psbB</name>
</gene>
<geneLocation type="chloroplast"/>
<sequence length="508" mass="55999">MGLPWYRVHTVVLNDPGRLLSVHIMHTALVSGWAGSMALYELAVFDPSDPVLDPMWRQGMFVIPFMTRLGITNSWGGWSITGGTITNPGIWSYEGVAGAHIVFSGLCFLAAIWHWVYWDLEIFCDERTGKPSLDLPKIFGIHLFLSGVACFGFGAFHVTGLYGPGIWVSDPYGLTGKVQSVNPAWGAEGFDPFVPGGIASHHIAAGTLGILAGLFHLSVRPPQRLYKGLRMGNIETVLSSSIAAVFFAAFVVAGTMWYGSATTPIELFGPTRYQWDQGYFQQEIYRRVGTGLAENLSLSEAWSKIPDKLAFYDYIGNNPAKGGLFRAGSMDNGDGIAVGWLGHPIFRDKDGHELFVRRMPTFFETFPVVLVDGDGIVRADVPFRRAESKYSVEQVGVTVEFYGGELNGVSYGDPATVKKYARRAQLGEIFELDRATLKSDGVFRSSPRGWFTFGHASFALLFFFGHIWHGARTLFRDVFAGIDPDLDAQVEFGAFQKLGDPTTRRQVV</sequence>
<comment type="function">
    <text evidence="1">One of the components of the core complex of photosystem II (PSII). It binds chlorophyll and helps catalyze the primary light-induced photochemical processes of PSII. PSII is a light-driven water:plastoquinone oxidoreductase, using light energy to abstract electrons from H(2)O, generating O(2) and a proton gradient subsequently used for ATP formation.</text>
</comment>
<comment type="cofactor">
    <text evidence="1">Binds multiple chlorophylls. PSII binds additional chlorophylls, carotenoids and specific lipids.</text>
</comment>
<comment type="subunit">
    <text evidence="1">PSII is composed of 1 copy each of membrane proteins PsbA, PsbB, PsbC, PsbD, PsbE, PsbF, PsbH, PsbI, PsbJ, PsbK, PsbL, PsbM, PsbT, PsbX, PsbY, PsbZ, Psb30/Ycf12, at least 3 peripheral proteins of the oxygen-evolving complex and a large number of cofactors. It forms dimeric complexes.</text>
</comment>
<comment type="subcellular location">
    <subcellularLocation>
        <location evidence="1">Plastid</location>
        <location evidence="1">Chloroplast thylakoid membrane</location>
        <topology evidence="1">Multi-pass membrane protein</topology>
    </subcellularLocation>
</comment>
<comment type="similarity">
    <text evidence="1">Belongs to the PsbB/PsbC family. PsbB subfamily.</text>
</comment>
<accession>A6MMX0</accession>
<keyword id="KW-0148">Chlorophyll</keyword>
<keyword id="KW-0150">Chloroplast</keyword>
<keyword id="KW-0157">Chromophore</keyword>
<keyword id="KW-0472">Membrane</keyword>
<keyword id="KW-0602">Photosynthesis</keyword>
<keyword id="KW-0604">Photosystem II</keyword>
<keyword id="KW-0934">Plastid</keyword>
<keyword id="KW-0793">Thylakoid</keyword>
<keyword id="KW-0812">Transmembrane</keyword>
<keyword id="KW-1133">Transmembrane helix</keyword>
<proteinExistence type="inferred from homology"/>
<organism>
    <name type="scientific">Illicium oligandrum</name>
    <name type="common">Star anise</name>
    <dbReference type="NCBI Taxonomy" id="145286"/>
    <lineage>
        <taxon>Eukaryota</taxon>
        <taxon>Viridiplantae</taxon>
        <taxon>Streptophyta</taxon>
        <taxon>Embryophyta</taxon>
        <taxon>Tracheophyta</taxon>
        <taxon>Spermatophyta</taxon>
        <taxon>Magnoliopsida</taxon>
        <taxon>Austrobaileyales</taxon>
        <taxon>Schisandraceae</taxon>
        <taxon>Illicium</taxon>
    </lineage>
</organism>
<protein>
    <recommendedName>
        <fullName evidence="1">Photosystem II CP47 reaction center protein</fullName>
    </recommendedName>
    <alternativeName>
        <fullName evidence="1">PSII 47 kDa protein</fullName>
    </alternativeName>
    <alternativeName>
        <fullName evidence="1">Protein CP-47</fullName>
    </alternativeName>
</protein>
<dbReference type="EMBL" id="EF380354">
    <property type="protein sequence ID" value="ABQ52544.1"/>
    <property type="molecule type" value="Genomic_DNA"/>
</dbReference>
<dbReference type="RefSeq" id="YP_001294296.1">
    <property type="nucleotide sequence ID" value="NC_009600.1"/>
</dbReference>
<dbReference type="SMR" id="A6MMX0"/>
<dbReference type="GeneID" id="5236768"/>
<dbReference type="GO" id="GO:0009535">
    <property type="term" value="C:chloroplast thylakoid membrane"/>
    <property type="evidence" value="ECO:0007669"/>
    <property type="project" value="UniProtKB-SubCell"/>
</dbReference>
<dbReference type="GO" id="GO:0009523">
    <property type="term" value="C:photosystem II"/>
    <property type="evidence" value="ECO:0007669"/>
    <property type="project" value="UniProtKB-KW"/>
</dbReference>
<dbReference type="GO" id="GO:0016168">
    <property type="term" value="F:chlorophyll binding"/>
    <property type="evidence" value="ECO:0007669"/>
    <property type="project" value="UniProtKB-UniRule"/>
</dbReference>
<dbReference type="GO" id="GO:0045156">
    <property type="term" value="F:electron transporter, transferring electrons within the cyclic electron transport pathway of photosynthesis activity"/>
    <property type="evidence" value="ECO:0007669"/>
    <property type="project" value="InterPro"/>
</dbReference>
<dbReference type="GO" id="GO:0009772">
    <property type="term" value="P:photosynthetic electron transport in photosystem II"/>
    <property type="evidence" value="ECO:0007669"/>
    <property type="project" value="InterPro"/>
</dbReference>
<dbReference type="FunFam" id="3.10.680.10:FF:000001">
    <property type="entry name" value="Photosystem II CP47 reaction center protein"/>
    <property type="match status" value="1"/>
</dbReference>
<dbReference type="Gene3D" id="3.10.680.10">
    <property type="entry name" value="Photosystem II CP47 reaction center protein"/>
    <property type="match status" value="1"/>
</dbReference>
<dbReference type="HAMAP" id="MF_01495">
    <property type="entry name" value="PSII_PsbB_CP47"/>
    <property type="match status" value="1"/>
</dbReference>
<dbReference type="InterPro" id="IPR000932">
    <property type="entry name" value="PS_antenna-like"/>
</dbReference>
<dbReference type="InterPro" id="IPR036001">
    <property type="entry name" value="PS_II_antenna-like_sf"/>
</dbReference>
<dbReference type="InterPro" id="IPR017486">
    <property type="entry name" value="PSII_PsbB"/>
</dbReference>
<dbReference type="NCBIfam" id="TIGR03039">
    <property type="entry name" value="PS_II_CP47"/>
    <property type="match status" value="1"/>
</dbReference>
<dbReference type="PANTHER" id="PTHR33180">
    <property type="entry name" value="PHOTOSYSTEM II CP43 REACTION CENTER PROTEIN"/>
    <property type="match status" value="1"/>
</dbReference>
<dbReference type="PANTHER" id="PTHR33180:SF37">
    <property type="entry name" value="PHOTOSYSTEM II CP43 REACTION CENTER PROTEIN"/>
    <property type="match status" value="1"/>
</dbReference>
<dbReference type="Pfam" id="PF00421">
    <property type="entry name" value="PSII"/>
    <property type="match status" value="1"/>
</dbReference>
<dbReference type="SUPFAM" id="SSF161077">
    <property type="entry name" value="Photosystem II antenna protein-like"/>
    <property type="match status" value="1"/>
</dbReference>
<evidence type="ECO:0000255" key="1">
    <source>
        <dbReference type="HAMAP-Rule" id="MF_01495"/>
    </source>
</evidence>